<dbReference type="EC" id="5.4.2.12" evidence="1"/>
<dbReference type="EMBL" id="AP006628">
    <property type="protein sequence ID" value="BAD04370.1"/>
    <property type="molecule type" value="Genomic_DNA"/>
</dbReference>
<dbReference type="SMR" id="Q6YQT8"/>
<dbReference type="STRING" id="262768.PAM_285"/>
<dbReference type="KEGG" id="poy:PAM_285"/>
<dbReference type="eggNOG" id="COG0696">
    <property type="taxonomic scope" value="Bacteria"/>
</dbReference>
<dbReference type="HOGENOM" id="CLU_026099_2_0_14"/>
<dbReference type="BioCyc" id="OYEL262768:G1G26-343-MONOMER"/>
<dbReference type="UniPathway" id="UPA00109">
    <property type="reaction ID" value="UER00186"/>
</dbReference>
<dbReference type="Proteomes" id="UP000002523">
    <property type="component" value="Chromosome"/>
</dbReference>
<dbReference type="GO" id="GO:0005829">
    <property type="term" value="C:cytosol"/>
    <property type="evidence" value="ECO:0007669"/>
    <property type="project" value="TreeGrafter"/>
</dbReference>
<dbReference type="GO" id="GO:0030145">
    <property type="term" value="F:manganese ion binding"/>
    <property type="evidence" value="ECO:0007669"/>
    <property type="project" value="UniProtKB-UniRule"/>
</dbReference>
<dbReference type="GO" id="GO:0004619">
    <property type="term" value="F:phosphoglycerate mutase activity"/>
    <property type="evidence" value="ECO:0007669"/>
    <property type="project" value="UniProtKB-EC"/>
</dbReference>
<dbReference type="GO" id="GO:0006007">
    <property type="term" value="P:glucose catabolic process"/>
    <property type="evidence" value="ECO:0007669"/>
    <property type="project" value="InterPro"/>
</dbReference>
<dbReference type="GO" id="GO:0006096">
    <property type="term" value="P:glycolytic process"/>
    <property type="evidence" value="ECO:0007669"/>
    <property type="project" value="UniProtKB-UniRule"/>
</dbReference>
<dbReference type="CDD" id="cd16010">
    <property type="entry name" value="iPGM"/>
    <property type="match status" value="1"/>
</dbReference>
<dbReference type="FunFam" id="3.40.1450.10:FF:000002">
    <property type="entry name" value="2,3-bisphosphoglycerate-independent phosphoglycerate mutase"/>
    <property type="match status" value="1"/>
</dbReference>
<dbReference type="Gene3D" id="3.40.720.10">
    <property type="entry name" value="Alkaline Phosphatase, subunit A"/>
    <property type="match status" value="1"/>
</dbReference>
<dbReference type="Gene3D" id="3.40.1450.10">
    <property type="entry name" value="BPG-independent phosphoglycerate mutase, domain B"/>
    <property type="match status" value="1"/>
</dbReference>
<dbReference type="HAMAP" id="MF_01038">
    <property type="entry name" value="GpmI"/>
    <property type="match status" value="1"/>
</dbReference>
<dbReference type="InterPro" id="IPR017850">
    <property type="entry name" value="Alkaline_phosphatase_core_sf"/>
</dbReference>
<dbReference type="InterPro" id="IPR011258">
    <property type="entry name" value="BPG-indep_PGM_N"/>
</dbReference>
<dbReference type="InterPro" id="IPR006124">
    <property type="entry name" value="Metalloenzyme"/>
</dbReference>
<dbReference type="InterPro" id="IPR036646">
    <property type="entry name" value="PGAM_B_sf"/>
</dbReference>
<dbReference type="InterPro" id="IPR005995">
    <property type="entry name" value="Pgm_bpd_ind"/>
</dbReference>
<dbReference type="NCBIfam" id="TIGR01307">
    <property type="entry name" value="pgm_bpd_ind"/>
    <property type="match status" value="1"/>
</dbReference>
<dbReference type="PANTHER" id="PTHR31637">
    <property type="entry name" value="2,3-BISPHOSPHOGLYCERATE-INDEPENDENT PHOSPHOGLYCERATE MUTASE"/>
    <property type="match status" value="1"/>
</dbReference>
<dbReference type="PANTHER" id="PTHR31637:SF0">
    <property type="entry name" value="2,3-BISPHOSPHOGLYCERATE-INDEPENDENT PHOSPHOGLYCERATE MUTASE"/>
    <property type="match status" value="1"/>
</dbReference>
<dbReference type="Pfam" id="PF06415">
    <property type="entry name" value="iPGM_N"/>
    <property type="match status" value="1"/>
</dbReference>
<dbReference type="Pfam" id="PF01676">
    <property type="entry name" value="Metalloenzyme"/>
    <property type="match status" value="1"/>
</dbReference>
<dbReference type="PIRSF" id="PIRSF001492">
    <property type="entry name" value="IPGAM"/>
    <property type="match status" value="1"/>
</dbReference>
<dbReference type="SUPFAM" id="SSF64158">
    <property type="entry name" value="2,3-Bisphosphoglycerate-independent phosphoglycerate mutase, substrate-binding domain"/>
    <property type="match status" value="1"/>
</dbReference>
<dbReference type="SUPFAM" id="SSF53649">
    <property type="entry name" value="Alkaline phosphatase-like"/>
    <property type="match status" value="1"/>
</dbReference>
<feature type="chain" id="PRO_0000212180" description="2,3-bisphosphoglycerate-independent phosphoglycerate mutase">
    <location>
        <begin position="1"/>
        <end position="512"/>
    </location>
</feature>
<feature type="active site" description="Phosphoserine intermediate" evidence="1">
    <location>
        <position position="62"/>
    </location>
</feature>
<feature type="binding site" evidence="1">
    <location>
        <position position="12"/>
    </location>
    <ligand>
        <name>Mn(2+)</name>
        <dbReference type="ChEBI" id="CHEBI:29035"/>
        <label>2</label>
    </ligand>
</feature>
<feature type="binding site" evidence="1">
    <location>
        <position position="62"/>
    </location>
    <ligand>
        <name>Mn(2+)</name>
        <dbReference type="ChEBI" id="CHEBI:29035"/>
        <label>2</label>
    </ligand>
</feature>
<feature type="binding site" evidence="1">
    <location>
        <position position="123"/>
    </location>
    <ligand>
        <name>substrate</name>
    </ligand>
</feature>
<feature type="binding site" evidence="1">
    <location>
        <begin position="154"/>
        <end position="155"/>
    </location>
    <ligand>
        <name>substrate</name>
    </ligand>
</feature>
<feature type="binding site" evidence="1">
    <location>
        <position position="181"/>
    </location>
    <ligand>
        <name>substrate</name>
    </ligand>
</feature>
<feature type="binding site" evidence="1">
    <location>
        <position position="187"/>
    </location>
    <ligand>
        <name>substrate</name>
    </ligand>
</feature>
<feature type="binding site" evidence="1">
    <location>
        <begin position="253"/>
        <end position="256"/>
    </location>
    <ligand>
        <name>substrate</name>
    </ligand>
</feature>
<feature type="binding site" evidence="1">
    <location>
        <position position="336"/>
    </location>
    <ligand>
        <name>substrate</name>
    </ligand>
</feature>
<feature type="binding site" evidence="1">
    <location>
        <position position="403"/>
    </location>
    <ligand>
        <name>Mn(2+)</name>
        <dbReference type="ChEBI" id="CHEBI:29035"/>
        <label>1</label>
    </ligand>
</feature>
<feature type="binding site" evidence="1">
    <location>
        <position position="407"/>
    </location>
    <ligand>
        <name>Mn(2+)</name>
        <dbReference type="ChEBI" id="CHEBI:29035"/>
        <label>1</label>
    </ligand>
</feature>
<feature type="binding site" evidence="1">
    <location>
        <position position="444"/>
    </location>
    <ligand>
        <name>Mn(2+)</name>
        <dbReference type="ChEBI" id="CHEBI:29035"/>
        <label>2</label>
    </ligand>
</feature>
<feature type="binding site" evidence="1">
    <location>
        <position position="445"/>
    </location>
    <ligand>
        <name>Mn(2+)</name>
        <dbReference type="ChEBI" id="CHEBI:29035"/>
        <label>2</label>
    </ligand>
</feature>
<feature type="binding site" evidence="1">
    <location>
        <position position="462"/>
    </location>
    <ligand>
        <name>Mn(2+)</name>
        <dbReference type="ChEBI" id="CHEBI:29035"/>
        <label>1</label>
    </ligand>
</feature>
<accession>Q6YQT8</accession>
<protein>
    <recommendedName>
        <fullName evidence="1">2,3-bisphosphoglycerate-independent phosphoglycerate mutase</fullName>
        <shortName evidence="1">BPG-independent PGAM</shortName>
        <shortName evidence="1">Phosphoglyceromutase</shortName>
        <shortName evidence="1">iPGM</shortName>
        <ecNumber evidence="1">5.4.2.12</ecNumber>
    </recommendedName>
</protein>
<keyword id="KW-0324">Glycolysis</keyword>
<keyword id="KW-0413">Isomerase</keyword>
<keyword id="KW-0464">Manganese</keyword>
<keyword id="KW-0479">Metal-binding</keyword>
<proteinExistence type="inferred from homology"/>
<organism>
    <name type="scientific">Onion yellows phytoplasma (strain OY-M)</name>
    <dbReference type="NCBI Taxonomy" id="262768"/>
    <lineage>
        <taxon>Bacteria</taxon>
        <taxon>Bacillati</taxon>
        <taxon>Mycoplasmatota</taxon>
        <taxon>Mollicutes</taxon>
        <taxon>Acholeplasmatales</taxon>
        <taxon>Acholeplasmataceae</taxon>
        <taxon>Candidatus Phytoplasma</taxon>
        <taxon>16SrI (Aster yellows group)</taxon>
    </lineage>
</organism>
<sequence>MTKKFVGLTILDGLGLTDQKENNAFHLAKTPYLDYLLKNFPNTTLKASGEEVGLPQGQMGNSEVGHLNLGAGRVVYQSLTQINKAIRDKSFFTNKQFLQAIEHVKKNNSKMHLLGLISDGGIHSHLDHFKALFDLLKENNLANNTFLHAFTDGRDTSPHSGINYIKDLLDYGFNIASVVGRYYALDRDNNWNRINLVYNMLTSKQAPVIDLPLEDTIQNFYNQGITDEFITPFITNPNGLINDNDAVIFVNFRPDRAMRLATALSNPCATNAFCSEGKTNFCGTKLLNNLFLVTMTKYSAQVKSVVAFEKITLKNIYGEVIANLGMHQLRIAETEKYPHVTFFFDGGKELQLKNADRILIPSPKVKTYDLKPEMSALEITTHAKTAILSGKYDTLILNFANPDMVGHTGFLDATIKAIQTVDSCLKEVLNAIFAVKGKACIVADHGNAEQMTDNQGNPHTAHTTNLVPFIVTDKNVVLKPGSLCDVAPTMLDLLEIKKPQEMTGNSLIKKLV</sequence>
<gene>
    <name evidence="1" type="primary">gpmI</name>
    <name type="ordered locus">PAM_285</name>
</gene>
<comment type="function">
    <text evidence="1">Catalyzes the interconversion of 2-phosphoglycerate and 3-phosphoglycerate.</text>
</comment>
<comment type="catalytic activity">
    <reaction evidence="1">
        <text>(2R)-2-phosphoglycerate = (2R)-3-phosphoglycerate</text>
        <dbReference type="Rhea" id="RHEA:15901"/>
        <dbReference type="ChEBI" id="CHEBI:58272"/>
        <dbReference type="ChEBI" id="CHEBI:58289"/>
        <dbReference type="EC" id="5.4.2.12"/>
    </reaction>
</comment>
<comment type="cofactor">
    <cofactor evidence="1">
        <name>Mn(2+)</name>
        <dbReference type="ChEBI" id="CHEBI:29035"/>
    </cofactor>
    <text evidence="1">Binds 2 manganese ions per subunit.</text>
</comment>
<comment type="pathway">
    <text evidence="1">Carbohydrate degradation; glycolysis; pyruvate from D-glyceraldehyde 3-phosphate: step 3/5.</text>
</comment>
<comment type="subunit">
    <text evidence="1">Monomer.</text>
</comment>
<comment type="similarity">
    <text evidence="1">Belongs to the BPG-independent phosphoglycerate mutase family.</text>
</comment>
<reference key="1">
    <citation type="journal article" date="2004" name="Nat. Genet.">
        <title>Reductive evolution suggested from the complete genome sequence of a plant-pathogenic phytoplasma.</title>
        <authorList>
            <person name="Oshima K."/>
            <person name="Kakizawa S."/>
            <person name="Nishigawa H."/>
            <person name="Jung H.-Y."/>
            <person name="Wei W."/>
            <person name="Suzuki S."/>
            <person name="Arashida R."/>
            <person name="Nakata D."/>
            <person name="Miyata S."/>
            <person name="Ugaki M."/>
            <person name="Namba S."/>
        </authorList>
    </citation>
    <scope>NUCLEOTIDE SEQUENCE [LARGE SCALE GENOMIC DNA]</scope>
    <source>
        <strain>OY-M</strain>
    </source>
</reference>
<name>GPMI_ONYPE</name>
<evidence type="ECO:0000255" key="1">
    <source>
        <dbReference type="HAMAP-Rule" id="MF_01038"/>
    </source>
</evidence>